<organism>
    <name type="scientific">Burkholderia mallei (strain SAVP1)</name>
    <dbReference type="NCBI Taxonomy" id="320388"/>
    <lineage>
        <taxon>Bacteria</taxon>
        <taxon>Pseudomonadati</taxon>
        <taxon>Pseudomonadota</taxon>
        <taxon>Betaproteobacteria</taxon>
        <taxon>Burkholderiales</taxon>
        <taxon>Burkholderiaceae</taxon>
        <taxon>Burkholderia</taxon>
        <taxon>pseudomallei group</taxon>
    </lineage>
</organism>
<comment type="function">
    <text evidence="1">Catalyzes the formation of S-adenosylmethionine (AdoMet) from methionine and ATP. The overall synthetic reaction is composed of two sequential steps, AdoMet formation and the subsequent tripolyphosphate hydrolysis which occurs prior to release of AdoMet from the enzyme.</text>
</comment>
<comment type="catalytic activity">
    <reaction evidence="1">
        <text>L-methionine + ATP + H2O = S-adenosyl-L-methionine + phosphate + diphosphate</text>
        <dbReference type="Rhea" id="RHEA:21080"/>
        <dbReference type="ChEBI" id="CHEBI:15377"/>
        <dbReference type="ChEBI" id="CHEBI:30616"/>
        <dbReference type="ChEBI" id="CHEBI:33019"/>
        <dbReference type="ChEBI" id="CHEBI:43474"/>
        <dbReference type="ChEBI" id="CHEBI:57844"/>
        <dbReference type="ChEBI" id="CHEBI:59789"/>
        <dbReference type="EC" id="2.5.1.6"/>
    </reaction>
</comment>
<comment type="cofactor">
    <cofactor evidence="1">
        <name>Mg(2+)</name>
        <dbReference type="ChEBI" id="CHEBI:18420"/>
    </cofactor>
    <text evidence="1">Binds 2 divalent ions per subunit.</text>
</comment>
<comment type="cofactor">
    <cofactor evidence="1">
        <name>K(+)</name>
        <dbReference type="ChEBI" id="CHEBI:29103"/>
    </cofactor>
    <text evidence="1">Binds 1 potassium ion per subunit.</text>
</comment>
<comment type="pathway">
    <text evidence="1">Amino-acid biosynthesis; S-adenosyl-L-methionine biosynthesis; S-adenosyl-L-methionine from L-methionine: step 1/1.</text>
</comment>
<comment type="subunit">
    <text evidence="1">Homotetramer; dimer of dimers.</text>
</comment>
<comment type="subcellular location">
    <subcellularLocation>
        <location evidence="1">Cytoplasm</location>
    </subcellularLocation>
</comment>
<comment type="similarity">
    <text evidence="1">Belongs to the AdoMet synthase family.</text>
</comment>
<protein>
    <recommendedName>
        <fullName evidence="1">S-adenosylmethionine synthase</fullName>
        <shortName evidence="1">AdoMet synthase</shortName>
        <ecNumber evidence="1">2.5.1.6</ecNumber>
    </recommendedName>
    <alternativeName>
        <fullName evidence="1">MAT</fullName>
    </alternativeName>
    <alternativeName>
        <fullName evidence="1">Methionine adenosyltransferase</fullName>
    </alternativeName>
</protein>
<reference key="1">
    <citation type="journal article" date="2010" name="Genome Biol. Evol.">
        <title>Continuing evolution of Burkholderia mallei through genome reduction and large-scale rearrangements.</title>
        <authorList>
            <person name="Losada L."/>
            <person name="Ronning C.M."/>
            <person name="DeShazer D."/>
            <person name="Woods D."/>
            <person name="Fedorova N."/>
            <person name="Kim H.S."/>
            <person name="Shabalina S.A."/>
            <person name="Pearson T.R."/>
            <person name="Brinkac L."/>
            <person name="Tan P."/>
            <person name="Nandi T."/>
            <person name="Crabtree J."/>
            <person name="Badger J."/>
            <person name="Beckstrom-Sternberg S."/>
            <person name="Saqib M."/>
            <person name="Schutzer S.E."/>
            <person name="Keim P."/>
            <person name="Nierman W.C."/>
        </authorList>
    </citation>
    <scope>NUCLEOTIDE SEQUENCE [LARGE SCALE GENOMIC DNA]</scope>
    <source>
        <strain>SAVP1</strain>
    </source>
</reference>
<dbReference type="EC" id="2.5.1.6" evidence="1"/>
<dbReference type="EMBL" id="CP000526">
    <property type="protein sequence ID" value="ABM51140.1"/>
    <property type="molecule type" value="Genomic_DNA"/>
</dbReference>
<dbReference type="RefSeq" id="WP_004199069.1">
    <property type="nucleotide sequence ID" value="NC_008785.1"/>
</dbReference>
<dbReference type="SMR" id="A1V7L5"/>
<dbReference type="GeneID" id="93058721"/>
<dbReference type="KEGG" id="bmv:BMASAVP1_A2924"/>
<dbReference type="HOGENOM" id="CLU_041802_1_1_4"/>
<dbReference type="UniPathway" id="UPA00315">
    <property type="reaction ID" value="UER00080"/>
</dbReference>
<dbReference type="GO" id="GO:0005737">
    <property type="term" value="C:cytoplasm"/>
    <property type="evidence" value="ECO:0007669"/>
    <property type="project" value="UniProtKB-SubCell"/>
</dbReference>
<dbReference type="GO" id="GO:0005524">
    <property type="term" value="F:ATP binding"/>
    <property type="evidence" value="ECO:0007669"/>
    <property type="project" value="UniProtKB-UniRule"/>
</dbReference>
<dbReference type="GO" id="GO:0000287">
    <property type="term" value="F:magnesium ion binding"/>
    <property type="evidence" value="ECO:0007669"/>
    <property type="project" value="UniProtKB-UniRule"/>
</dbReference>
<dbReference type="GO" id="GO:0004478">
    <property type="term" value="F:methionine adenosyltransferase activity"/>
    <property type="evidence" value="ECO:0007669"/>
    <property type="project" value="UniProtKB-UniRule"/>
</dbReference>
<dbReference type="GO" id="GO:0006730">
    <property type="term" value="P:one-carbon metabolic process"/>
    <property type="evidence" value="ECO:0007669"/>
    <property type="project" value="UniProtKB-KW"/>
</dbReference>
<dbReference type="GO" id="GO:0006556">
    <property type="term" value="P:S-adenosylmethionine biosynthetic process"/>
    <property type="evidence" value="ECO:0007669"/>
    <property type="project" value="UniProtKB-UniRule"/>
</dbReference>
<dbReference type="CDD" id="cd18079">
    <property type="entry name" value="S-AdoMet_synt"/>
    <property type="match status" value="1"/>
</dbReference>
<dbReference type="FunFam" id="3.30.300.10:FF:000003">
    <property type="entry name" value="S-adenosylmethionine synthase"/>
    <property type="match status" value="1"/>
</dbReference>
<dbReference type="FunFam" id="3.30.300.10:FF:000004">
    <property type="entry name" value="S-adenosylmethionine synthase"/>
    <property type="match status" value="1"/>
</dbReference>
<dbReference type="Gene3D" id="3.30.300.10">
    <property type="match status" value="3"/>
</dbReference>
<dbReference type="HAMAP" id="MF_00086">
    <property type="entry name" value="S_AdoMet_synth1"/>
    <property type="match status" value="1"/>
</dbReference>
<dbReference type="InterPro" id="IPR022631">
    <property type="entry name" value="ADOMET_SYNTHASE_CS"/>
</dbReference>
<dbReference type="InterPro" id="IPR022630">
    <property type="entry name" value="S-AdoMet_synt_C"/>
</dbReference>
<dbReference type="InterPro" id="IPR022629">
    <property type="entry name" value="S-AdoMet_synt_central"/>
</dbReference>
<dbReference type="InterPro" id="IPR022628">
    <property type="entry name" value="S-AdoMet_synt_N"/>
</dbReference>
<dbReference type="InterPro" id="IPR002133">
    <property type="entry name" value="S-AdoMet_synthetase"/>
</dbReference>
<dbReference type="InterPro" id="IPR022636">
    <property type="entry name" value="S-AdoMet_synthetase_sfam"/>
</dbReference>
<dbReference type="NCBIfam" id="TIGR01034">
    <property type="entry name" value="metK"/>
    <property type="match status" value="1"/>
</dbReference>
<dbReference type="PANTHER" id="PTHR11964">
    <property type="entry name" value="S-ADENOSYLMETHIONINE SYNTHETASE"/>
    <property type="match status" value="1"/>
</dbReference>
<dbReference type="Pfam" id="PF02773">
    <property type="entry name" value="S-AdoMet_synt_C"/>
    <property type="match status" value="1"/>
</dbReference>
<dbReference type="Pfam" id="PF02772">
    <property type="entry name" value="S-AdoMet_synt_M"/>
    <property type="match status" value="1"/>
</dbReference>
<dbReference type="Pfam" id="PF00438">
    <property type="entry name" value="S-AdoMet_synt_N"/>
    <property type="match status" value="1"/>
</dbReference>
<dbReference type="PIRSF" id="PIRSF000497">
    <property type="entry name" value="MAT"/>
    <property type="match status" value="1"/>
</dbReference>
<dbReference type="SUPFAM" id="SSF55973">
    <property type="entry name" value="S-adenosylmethionine synthetase"/>
    <property type="match status" value="3"/>
</dbReference>
<dbReference type="PROSITE" id="PS00376">
    <property type="entry name" value="ADOMET_SYNTHASE_1"/>
    <property type="match status" value="1"/>
</dbReference>
<dbReference type="PROSITE" id="PS00377">
    <property type="entry name" value="ADOMET_SYNTHASE_2"/>
    <property type="match status" value="1"/>
</dbReference>
<accession>A1V7L5</accession>
<keyword id="KW-0067">ATP-binding</keyword>
<keyword id="KW-0963">Cytoplasm</keyword>
<keyword id="KW-0460">Magnesium</keyword>
<keyword id="KW-0479">Metal-binding</keyword>
<keyword id="KW-0547">Nucleotide-binding</keyword>
<keyword id="KW-0554">One-carbon metabolism</keyword>
<keyword id="KW-0630">Potassium</keyword>
<keyword id="KW-0808">Transferase</keyword>
<proteinExistence type="inferred from homology"/>
<sequence>MANDYLFTSESVSEGHPDKVADQISDAILDAILAQDKYSRVAAETLCNTGLVVLAGEITTTANIDYIQIARDTIKRIGYDNTDYGIDYRGCAVLVAYDKQSPDIAQGVDRAHDNNLDQGAGDQGLMFGYACDETPELMPLPIHLSHRLVERQANLRRDGRLPWLRPDAKSQVTVRYVDGKPHSIDTVVLSTQHAPEIDLPALREAVIEEVIKPTLPADLIKGDIKFLVNPTGRFVIGGPQGDCGLTGRKIIVDTYGGAAPHGGGAFSGKDPSKVDRSAAYAGRYVAKNIVAAGLASRALIQVSYAIGVAEPTSVMVNTFGTGRVSDETITKLVREHFDLRPKGIIQMLDLLRPIYEKTAAYGHFGREEPEFSWEAADKALALAEAAGVEPAVQVA</sequence>
<feature type="chain" id="PRO_1000007929" description="S-adenosylmethionine synthase">
    <location>
        <begin position="1"/>
        <end position="395"/>
    </location>
</feature>
<feature type="region of interest" description="Flexible loop" evidence="1">
    <location>
        <begin position="100"/>
        <end position="110"/>
    </location>
</feature>
<feature type="binding site" description="in other chain" evidence="1">
    <location>
        <position position="16"/>
    </location>
    <ligand>
        <name>ATP</name>
        <dbReference type="ChEBI" id="CHEBI:30616"/>
        <note>ligand shared between two neighboring subunits</note>
    </ligand>
</feature>
<feature type="binding site" evidence="1">
    <location>
        <position position="18"/>
    </location>
    <ligand>
        <name>Mg(2+)</name>
        <dbReference type="ChEBI" id="CHEBI:18420"/>
    </ligand>
</feature>
<feature type="binding site" evidence="1">
    <location>
        <position position="44"/>
    </location>
    <ligand>
        <name>K(+)</name>
        <dbReference type="ChEBI" id="CHEBI:29103"/>
    </ligand>
</feature>
<feature type="binding site" description="in other chain" evidence="1">
    <location>
        <position position="57"/>
    </location>
    <ligand>
        <name>L-methionine</name>
        <dbReference type="ChEBI" id="CHEBI:57844"/>
        <note>ligand shared between two neighboring subunits</note>
    </ligand>
</feature>
<feature type="binding site" description="in other chain" evidence="1">
    <location>
        <position position="100"/>
    </location>
    <ligand>
        <name>L-methionine</name>
        <dbReference type="ChEBI" id="CHEBI:57844"/>
        <note>ligand shared between two neighboring subunits</note>
    </ligand>
</feature>
<feature type="binding site" description="in other chain" evidence="1">
    <location>
        <begin position="167"/>
        <end position="169"/>
    </location>
    <ligand>
        <name>ATP</name>
        <dbReference type="ChEBI" id="CHEBI:30616"/>
        <note>ligand shared between two neighboring subunits</note>
    </ligand>
</feature>
<feature type="binding site" description="in other chain" evidence="1">
    <location>
        <begin position="233"/>
        <end position="234"/>
    </location>
    <ligand>
        <name>ATP</name>
        <dbReference type="ChEBI" id="CHEBI:30616"/>
        <note>ligand shared between two neighboring subunits</note>
    </ligand>
</feature>
<feature type="binding site" evidence="1">
    <location>
        <position position="242"/>
    </location>
    <ligand>
        <name>ATP</name>
        <dbReference type="ChEBI" id="CHEBI:30616"/>
        <note>ligand shared between two neighboring subunits</note>
    </ligand>
</feature>
<feature type="binding site" evidence="1">
    <location>
        <position position="242"/>
    </location>
    <ligand>
        <name>L-methionine</name>
        <dbReference type="ChEBI" id="CHEBI:57844"/>
        <note>ligand shared between two neighboring subunits</note>
    </ligand>
</feature>
<feature type="binding site" description="in other chain" evidence="1">
    <location>
        <begin position="248"/>
        <end position="249"/>
    </location>
    <ligand>
        <name>ATP</name>
        <dbReference type="ChEBI" id="CHEBI:30616"/>
        <note>ligand shared between two neighboring subunits</note>
    </ligand>
</feature>
<feature type="binding site" evidence="1">
    <location>
        <position position="265"/>
    </location>
    <ligand>
        <name>ATP</name>
        <dbReference type="ChEBI" id="CHEBI:30616"/>
        <note>ligand shared between two neighboring subunits</note>
    </ligand>
</feature>
<feature type="binding site" evidence="1">
    <location>
        <position position="269"/>
    </location>
    <ligand>
        <name>ATP</name>
        <dbReference type="ChEBI" id="CHEBI:30616"/>
        <note>ligand shared between two neighboring subunits</note>
    </ligand>
</feature>
<feature type="binding site" description="in other chain" evidence="1">
    <location>
        <position position="273"/>
    </location>
    <ligand>
        <name>L-methionine</name>
        <dbReference type="ChEBI" id="CHEBI:57844"/>
        <note>ligand shared between two neighboring subunits</note>
    </ligand>
</feature>
<name>METK_BURMS</name>
<evidence type="ECO:0000255" key="1">
    <source>
        <dbReference type="HAMAP-Rule" id="MF_00086"/>
    </source>
</evidence>
<gene>
    <name evidence="1" type="primary">metK</name>
    <name type="ordered locus">BMASAVP1_A2924</name>
</gene>